<accession>D3Z902</accession>
<feature type="chain" id="PRO_0000442030" description="F-box/WD repeat-containing protein 7">
    <location>
        <begin position="1"/>
        <end position="713"/>
    </location>
</feature>
<feature type="domain" description="F-box" evidence="4">
    <location>
        <begin position="284"/>
        <end position="330"/>
    </location>
</feature>
<feature type="repeat" description="WD 1" evidence="3">
    <location>
        <begin position="384"/>
        <end position="424"/>
    </location>
</feature>
<feature type="repeat" description="WD 2" evidence="3">
    <location>
        <begin position="426"/>
        <end position="462"/>
    </location>
</feature>
<feature type="repeat" description="WD 3" evidence="3">
    <location>
        <begin position="465"/>
        <end position="504"/>
    </location>
</feature>
<feature type="repeat" description="WD 4" evidence="3">
    <location>
        <begin position="506"/>
        <end position="542"/>
    </location>
</feature>
<feature type="repeat" description="WD 5" evidence="3">
    <location>
        <begin position="545"/>
        <end position="584"/>
    </location>
</feature>
<feature type="repeat" description="WD 6" evidence="3">
    <location>
        <begin position="586"/>
        <end position="624"/>
    </location>
</feature>
<feature type="repeat" description="WD 7" evidence="3">
    <location>
        <begin position="628"/>
        <end position="665"/>
    </location>
</feature>
<feature type="region of interest" description="Disordered" evidence="5">
    <location>
        <begin position="1"/>
        <end position="150"/>
    </location>
</feature>
<feature type="coiled-coil region" evidence="3">
    <location>
        <begin position="94"/>
        <end position="136"/>
    </location>
</feature>
<feature type="compositionally biased region" description="Basic and acidic residues" evidence="5">
    <location>
        <begin position="46"/>
        <end position="55"/>
    </location>
</feature>
<feature type="compositionally biased region" description="Polar residues" evidence="5">
    <location>
        <begin position="69"/>
        <end position="84"/>
    </location>
</feature>
<feature type="compositionally biased region" description="Acidic residues" evidence="5">
    <location>
        <begin position="87"/>
        <end position="135"/>
    </location>
</feature>
<feature type="compositionally biased region" description="Basic and acidic residues" evidence="5">
    <location>
        <begin position="136"/>
        <end position="145"/>
    </location>
</feature>
<feature type="modified residue" description="Phosphoserine" evidence="2">
    <location>
        <position position="26"/>
    </location>
</feature>
<feature type="modified residue" description="Phosphothreonine" evidence="2">
    <location>
        <position position="211"/>
    </location>
</feature>
<feature type="modified residue" description="Phosphoserine" evidence="2">
    <location>
        <position position="233"/>
    </location>
</feature>
<reference evidence="8" key="1">
    <citation type="journal article" date="2004" name="Nature">
        <title>Genome sequence of the Brown Norway rat yields insights into mammalian evolution.</title>
        <authorList>
            <person name="Gibbs R.A."/>
            <person name="Weinstock G.M."/>
            <person name="Metzker M.L."/>
            <person name="Muzny D.M."/>
            <person name="Sodergren E.J."/>
            <person name="Scherer S."/>
            <person name="Scott G."/>
            <person name="Steffen D."/>
            <person name="Worley K.C."/>
            <person name="Burch P.E."/>
            <person name="Okwuonu G."/>
            <person name="Hines S."/>
            <person name="Lewis L."/>
            <person name="Deramo C."/>
            <person name="Delgado O."/>
            <person name="Dugan-Rocha S."/>
            <person name="Miner G."/>
            <person name="Morgan M."/>
            <person name="Hawes A."/>
            <person name="Gill R."/>
            <person name="Holt R.A."/>
            <person name="Adams M.D."/>
            <person name="Amanatides P.G."/>
            <person name="Baden-Tillson H."/>
            <person name="Barnstead M."/>
            <person name="Chin S."/>
            <person name="Evans C.A."/>
            <person name="Ferriera S."/>
            <person name="Fosler C."/>
            <person name="Glodek A."/>
            <person name="Gu Z."/>
            <person name="Jennings D."/>
            <person name="Kraft C.L."/>
            <person name="Nguyen T."/>
            <person name="Pfannkoch C.M."/>
            <person name="Sitter C."/>
            <person name="Sutton G.G."/>
            <person name="Venter J.C."/>
            <person name="Woodage T."/>
            <person name="Smith D."/>
            <person name="Lee H.-M."/>
            <person name="Gustafson E."/>
            <person name="Cahill P."/>
            <person name="Kana A."/>
            <person name="Doucette-Stamm L."/>
            <person name="Weinstock K."/>
            <person name="Fechtel K."/>
            <person name="Weiss R.B."/>
            <person name="Dunn D.M."/>
            <person name="Green E.D."/>
            <person name="Blakesley R.W."/>
            <person name="Bouffard G.G."/>
            <person name="De Jong P.J."/>
            <person name="Osoegawa K."/>
            <person name="Zhu B."/>
            <person name="Marra M."/>
            <person name="Schein J."/>
            <person name="Bosdet I."/>
            <person name="Fjell C."/>
            <person name="Jones S."/>
            <person name="Krzywinski M."/>
            <person name="Mathewson C."/>
            <person name="Siddiqui A."/>
            <person name="Wye N."/>
            <person name="McPherson J."/>
            <person name="Zhao S."/>
            <person name="Fraser C.M."/>
            <person name="Shetty J."/>
            <person name="Shatsman S."/>
            <person name="Geer K."/>
            <person name="Chen Y."/>
            <person name="Abramzon S."/>
            <person name="Nierman W.C."/>
            <person name="Havlak P.H."/>
            <person name="Chen R."/>
            <person name="Durbin K.J."/>
            <person name="Egan A."/>
            <person name="Ren Y."/>
            <person name="Song X.-Z."/>
            <person name="Li B."/>
            <person name="Liu Y."/>
            <person name="Qin X."/>
            <person name="Cawley S."/>
            <person name="Cooney A.J."/>
            <person name="D'Souza L.M."/>
            <person name="Martin K."/>
            <person name="Wu J.Q."/>
            <person name="Gonzalez-Garay M.L."/>
            <person name="Jackson A.R."/>
            <person name="Kalafus K.J."/>
            <person name="McLeod M.P."/>
            <person name="Milosavljevic A."/>
            <person name="Virk D."/>
            <person name="Volkov A."/>
            <person name="Wheeler D.A."/>
            <person name="Zhang Z."/>
            <person name="Bailey J.A."/>
            <person name="Eichler E.E."/>
            <person name="Tuzun E."/>
            <person name="Birney E."/>
            <person name="Mongin E."/>
            <person name="Ureta-Vidal A."/>
            <person name="Woodwark C."/>
            <person name="Zdobnov E."/>
            <person name="Bork P."/>
            <person name="Suyama M."/>
            <person name="Torrents D."/>
            <person name="Alexandersson M."/>
            <person name="Trask B.J."/>
            <person name="Young J.M."/>
            <person name="Huang H."/>
            <person name="Wang H."/>
            <person name="Xing H."/>
            <person name="Daniels S."/>
            <person name="Gietzen D."/>
            <person name="Schmidt J."/>
            <person name="Stevens K."/>
            <person name="Vitt U."/>
            <person name="Wingrove J."/>
            <person name="Camara F."/>
            <person name="Mar Alba M."/>
            <person name="Abril J.F."/>
            <person name="Guigo R."/>
            <person name="Smit A."/>
            <person name="Dubchak I."/>
            <person name="Rubin E.M."/>
            <person name="Couronne O."/>
            <person name="Poliakov A."/>
            <person name="Huebner N."/>
            <person name="Ganten D."/>
            <person name="Goesele C."/>
            <person name="Hummel O."/>
            <person name="Kreitler T."/>
            <person name="Lee Y.-A."/>
            <person name="Monti J."/>
            <person name="Schulz H."/>
            <person name="Zimdahl H."/>
            <person name="Himmelbauer H."/>
            <person name="Lehrach H."/>
            <person name="Jacob H.J."/>
            <person name="Bromberg S."/>
            <person name="Gullings-Handley J."/>
            <person name="Jensen-Seaman M.I."/>
            <person name="Kwitek A.E."/>
            <person name="Lazar J."/>
            <person name="Pasko D."/>
            <person name="Tonellato P.J."/>
            <person name="Twigger S."/>
            <person name="Ponting C.P."/>
            <person name="Duarte J.M."/>
            <person name="Rice S."/>
            <person name="Goodstadt L."/>
            <person name="Beatson S.A."/>
            <person name="Emes R.D."/>
            <person name="Winter E.E."/>
            <person name="Webber C."/>
            <person name="Brandt P."/>
            <person name="Nyakatura G."/>
            <person name="Adetobi M."/>
            <person name="Chiaromonte F."/>
            <person name="Elnitski L."/>
            <person name="Eswara P."/>
            <person name="Hardison R.C."/>
            <person name="Hou M."/>
            <person name="Kolbe D."/>
            <person name="Makova K."/>
            <person name="Miller W."/>
            <person name="Nekrutenko A."/>
            <person name="Riemer C."/>
            <person name="Schwartz S."/>
            <person name="Taylor J."/>
            <person name="Yang S."/>
            <person name="Zhang Y."/>
            <person name="Lindpaintner K."/>
            <person name="Andrews T.D."/>
            <person name="Caccamo M."/>
            <person name="Clamp M."/>
            <person name="Clarke L."/>
            <person name="Curwen V."/>
            <person name="Durbin R.M."/>
            <person name="Eyras E."/>
            <person name="Searle S.M."/>
            <person name="Cooper G.M."/>
            <person name="Batzoglou S."/>
            <person name="Brudno M."/>
            <person name="Sidow A."/>
            <person name="Stone E.A."/>
            <person name="Payseur B.A."/>
            <person name="Bourque G."/>
            <person name="Lopez-Otin C."/>
            <person name="Puente X.S."/>
            <person name="Chakrabarti K."/>
            <person name="Chatterji S."/>
            <person name="Dewey C."/>
            <person name="Pachter L."/>
            <person name="Bray N."/>
            <person name="Yap V.B."/>
            <person name="Caspi A."/>
            <person name="Tesler G."/>
            <person name="Pevzner P.A."/>
            <person name="Haussler D."/>
            <person name="Roskin K.M."/>
            <person name="Baertsch R."/>
            <person name="Clawson H."/>
            <person name="Furey T.S."/>
            <person name="Hinrichs A.S."/>
            <person name="Karolchik D."/>
            <person name="Kent W.J."/>
            <person name="Rosenbloom K.R."/>
            <person name="Trumbower H."/>
            <person name="Weirauch M."/>
            <person name="Cooper D.N."/>
            <person name="Stenson P.D."/>
            <person name="Ma B."/>
            <person name="Brent M."/>
            <person name="Arumugam M."/>
            <person name="Shteynberg D."/>
            <person name="Copley R.R."/>
            <person name="Taylor M.S."/>
            <person name="Riethman H."/>
            <person name="Mudunuri U."/>
            <person name="Peterson J."/>
            <person name="Guyer M."/>
            <person name="Felsenfeld A."/>
            <person name="Old S."/>
            <person name="Mockrin S."/>
            <person name="Collins F.S."/>
        </authorList>
    </citation>
    <scope>NUCLEOTIDE SEQUENCE [LARGE SCALE GENOMIC DNA]</scope>
    <source>
        <strain evidence="8">Brown Norway</strain>
    </source>
</reference>
<reference evidence="7" key="2">
    <citation type="journal article" date="2016" name="EMBO J.">
        <title>Synaptonuclear messenger PRR7 inhibits c-Jun ubiquitination and regulates NMDA-mediated excitotoxicity.</title>
        <authorList>
            <person name="Kravchick D.O."/>
            <person name="Karpova A."/>
            <person name="Hrdinka M."/>
            <person name="Lopez-Rojas J."/>
            <person name="Iacobas S."/>
            <person name="Carbonell A.U."/>
            <person name="Iacobas D.A."/>
            <person name="Kreutz M.R."/>
            <person name="Jordan B.A."/>
        </authorList>
    </citation>
    <scope>INTERACTION WITH PRR7</scope>
</reference>
<name>FBXW7_RAT</name>
<comment type="function">
    <text evidence="1 2">Substrate recognition component of a SCF (SKP1-CUL1-F-box protein) E3 ubiquitin-protein ligase complex which mediates the ubiquitination and subsequent proteasomal degradation of target proteins (By similarity). Recognizes and binds phosphorylated sites/phosphodegrons within target proteins and thereafter brings them to the SCF complex for ubiquitination (By similarity). Identified substrates include cyclin-E (CCNE1 or CCNE2), JUN, MYC, NOTCH1 released notch intracellular domain (NICD), NOTCH2, MCL1, MLST8, RICTOR and probably PSEN1 (By similarity). Acts as a negative regulator of JNK signaling by binding to phosphorylated JUN and promoting its ubiquitination and subsequent degradation (By similarity). SCF(FBXW7) complex mediates the ubiquitination and subsequent degradation of NFE2L1 (By similarity). Involved in bone homeostasis and negative regulation of osteoclast differentiation (By similarity). Regulates the amplitude of the cyclic expression of hepatic core clock genes and genes involved in lipid and glucose metabolism via ubiquitination and proteasomal degradation of their transcriptional repressor NR1D1; CDK1-dependent phosphorylation of NR1D1 is necessary for SCF(FBXW7)-mediated ubiquitination (By similarity). Also able to promote 'Lys-63'-linked ubiquitination in response to DNA damage (By similarity). The SCF(FBXW7) complex facilitates double-strand break repair following phosphorylation by ATM: phosphorylation promotes localization to sites of double-strand breaks and 'Lys-63'-linked ubiquitination of phosphorylated XRCC4, enhancing DNA non-homologous end joining (By similarity).</text>
</comment>
<comment type="pathway">
    <text evidence="2">Protein modification; protein ubiquitination.</text>
</comment>
<comment type="subunit">
    <text evidence="1 2 6">Homodimer; homodimerization plays a role in substrate binding and/or ubiquitination and degradation (By similarity). Component of the SCF(FBXW7) complex consisting of CUL1, RBX1, SKP1 and FBXW7 (By similarity). Interacts (via F-box domain) with SKP1. Interacts (via F-box domain) with pseudophosphatase STYX; the interaction is direct and prevents FBXW7 interaction with SKP1 (By similarity). Interacts with cyclin-E (CCNE1 or CCNE2) (By similarity). Interacts with PSEN1 (By similarity). Forms a trimeric complex with NOTCH1 and SGK1 (By similarity). Interacts with NOTCH1 intracellular domain/NICD and NOTCH4 intracellular domain/NICD (By similarity). Interacts with NOTCH2 intracellular domain (N2ICD) (By similarity). Interacts with MYC (when phosphorylated) (By similarity). Interacts with USP28, counteracting ubiquitination of MYC (By similarity). Interacts (when phosphorylated at Thr-211) with PIN1, disrupting FBXW7 dimerization and promoting FBXW7 autoubiquitination and degradation (By similarity). Interacts with UBE2QL1 (By similarity). Interacts with FAM83D; promotes FBXW7 degradation (By similarity). Interacts with MYCN; FBXW7 competes with AURKA for binding to unphosphorylated MYCN but not for binding to phosphorylated MYCN (By similarity). Interacts with JUN (By similarity). Found in a complex with JUN and PRR7 (PubMed:27458189). Interacts with JUN and PRR7; the interaction inhibits ubiquitination-mediated JUN degradation, promoting its phosphorylation and transcriptional activity (By similarity). Interacts with NFE2L1 (By similarity). Interacts with NR1D1 (By similarity). Interacts with RICTOR; mediates RICTOR ubiquitination and degradation (By similarity).</text>
</comment>
<comment type="subcellular location">
    <subcellularLocation>
        <location evidence="2">Nucleus</location>
        <location evidence="2">Nucleoplasm</location>
    </subcellularLocation>
    <subcellularLocation>
        <location evidence="2">Chromosome</location>
    </subcellularLocation>
    <text evidence="2">Localizes to site of double-strand breaks following phosphorylation by ATM.</text>
</comment>
<comment type="domain">
    <text evidence="2">The WD repeats mediate interaction with substrates of the SCF (SKP1-CUL1-F-box protein) E3 ubiquitin-protein ligase complex.</text>
</comment>
<comment type="domain">
    <text evidence="2">The F-box domain mediates interaction with SKP1.</text>
</comment>
<comment type="PTM">
    <text evidence="2">Phosphorylation at Thr-211 promotes interaction with PIN1, leading to disrupt FBXW7 dimerization and promoting FBXW7 autoubiquitination and degradation. Phosphorylated by ATM at Ser-26 in response to DNA damage, promoting recruitment to DNA damage sites and 'Lys-63'-linked ubiquitination of phosphorylated XRCC4.</text>
</comment>
<comment type="PTM">
    <text evidence="2">Ubiquitinated: autoubiquitinates following phosphorylation at Thr-211 and subsequent interaction with PIN1. Ubiquitination leads to its degradation.</text>
</comment>
<organism evidence="8">
    <name type="scientific">Rattus norvegicus</name>
    <name type="common">Rat</name>
    <dbReference type="NCBI Taxonomy" id="10116"/>
    <lineage>
        <taxon>Eukaryota</taxon>
        <taxon>Metazoa</taxon>
        <taxon>Chordata</taxon>
        <taxon>Craniata</taxon>
        <taxon>Vertebrata</taxon>
        <taxon>Euteleostomi</taxon>
        <taxon>Mammalia</taxon>
        <taxon>Eutheria</taxon>
        <taxon>Euarchontoglires</taxon>
        <taxon>Glires</taxon>
        <taxon>Rodentia</taxon>
        <taxon>Myomorpha</taxon>
        <taxon>Muroidea</taxon>
        <taxon>Muridae</taxon>
        <taxon>Murinae</taxon>
        <taxon>Rattus</taxon>
    </lineage>
</organism>
<sequence length="713" mass="80367">MNQELLSVGSKRRRTGGSLRGNASSSQVDEEQMNRVVEEDPQQQPRHQEEEHTARNGELVGADPRPGAQNDSQQGQVEENNNRFVSVDEDSSGNQEEQEEDEEHAGEQEEEEEEEEEEEEEEEMDQESDDFDQSDDSSREDEHTHNSNVTNCTSVVDLPINQLSSPFYTKTTKMKRKLDHGSEVRSFSLGKKPCKVSDYTSTTGLVPCSATPTTFGDLRAANGQGQQRRRITSVQPPTGLQEWLKMFQSWSGPEKLLALDELIDSCEPTQVKHMMQVIEPQFQRDFISLLPKELALYVLSFLEPKDLLQAAQTCRYWRILAEDNLLWREKCKEEGIDEPLHIKRRKIIKPGFIHSPWKSAYIRQHRIDTNWRRGELRSPKVLKGHDDHVITCLQFCGNRIVSGSDDNTLKVWSAVTGKCLRTLVGHTGGVWSSQMRDNIIISGSTDRTLKVWNAETGECIHTLYGHTSTVRCMHLHEKRVVSGSRDATLRVWDIETGQCLHVLMGHVAAVRCVQYDGRRVVSGAYDFMVKVWDPETETCLHTLQGHTNRVYSLQFDGIHVVSGSLDTSIRVWDVETGNCIHTLTGHQSLTSGMELKDNILVSGNADSTVKIWDIKTGQCLQTLQGPSKHQSAVTCLQFNKNFVITSSDDGTVKLWDLKTGEFIRNLVTLESGGSGGVVWRIRASNTKLVCAVGSRNGTEETKLLVLDFDVDMK</sequence>
<gene>
    <name evidence="9" type="primary">Fbxw7</name>
</gene>
<dbReference type="EMBL" id="AABR07012054">
    <property type="status" value="NOT_ANNOTATED_CDS"/>
    <property type="molecule type" value="Genomic_DNA"/>
</dbReference>
<dbReference type="EMBL" id="AABR07012055">
    <property type="status" value="NOT_ANNOTATED_CDS"/>
    <property type="molecule type" value="Genomic_DNA"/>
</dbReference>
<dbReference type="EMBL" id="AABR07012056">
    <property type="status" value="NOT_ANNOTATED_CDS"/>
    <property type="molecule type" value="Genomic_DNA"/>
</dbReference>
<dbReference type="RefSeq" id="NP_001406457.1">
    <property type="nucleotide sequence ID" value="NM_001419528.2"/>
</dbReference>
<dbReference type="RefSeq" id="XP_038959667.1">
    <property type="nucleotide sequence ID" value="XM_039103739.2"/>
</dbReference>
<dbReference type="RefSeq" id="XP_038959669.1">
    <property type="nucleotide sequence ID" value="XM_039103741.2"/>
</dbReference>
<dbReference type="RefSeq" id="XP_038959670.1">
    <property type="nucleotide sequence ID" value="XM_039103742.2"/>
</dbReference>
<dbReference type="RefSeq" id="XP_038959671.1">
    <property type="nucleotide sequence ID" value="XM_039103743.2"/>
</dbReference>
<dbReference type="RefSeq" id="XP_038959672.1">
    <property type="nucleotide sequence ID" value="XM_039103744.2"/>
</dbReference>
<dbReference type="RefSeq" id="XP_063137152.1">
    <property type="nucleotide sequence ID" value="XM_063281082.1"/>
</dbReference>
<dbReference type="SMR" id="D3Z902"/>
<dbReference type="CORUM" id="D3Z902"/>
<dbReference type="FunCoup" id="D3Z902">
    <property type="interactions" value="2933"/>
</dbReference>
<dbReference type="STRING" id="10116.ENSRNOP00000050193"/>
<dbReference type="PhosphoSitePlus" id="D3Z902"/>
<dbReference type="PaxDb" id="10116-ENSRNOP00000050193"/>
<dbReference type="PeptideAtlas" id="D3Z902"/>
<dbReference type="Ensembl" id="ENSRNOT00000052051.7">
    <property type="protein sequence ID" value="ENSRNOP00000050193.4"/>
    <property type="gene ID" value="ENSRNOG00000010889.7"/>
</dbReference>
<dbReference type="GeneID" id="100360914"/>
<dbReference type="AGR" id="RGD:2321145"/>
<dbReference type="RGD" id="2321145">
    <property type="gene designation" value="Fbxw7"/>
</dbReference>
<dbReference type="eggNOG" id="KOG0274">
    <property type="taxonomic scope" value="Eukaryota"/>
</dbReference>
<dbReference type="GeneTree" id="ENSGT00940000154986"/>
<dbReference type="InParanoid" id="D3Z902"/>
<dbReference type="OrthoDB" id="190105at2759"/>
<dbReference type="Reactome" id="R-RNO-8951664">
    <property type="pathway name" value="Neddylation"/>
</dbReference>
<dbReference type="Reactome" id="R-RNO-983168">
    <property type="pathway name" value="Antigen processing: Ubiquitination &amp; Proteasome degradation"/>
</dbReference>
<dbReference type="UniPathway" id="UPA00143"/>
<dbReference type="PRO" id="PR:D3Z902"/>
<dbReference type="Proteomes" id="UP000002494">
    <property type="component" value="Chromosome 2"/>
</dbReference>
<dbReference type="Bgee" id="ENSRNOG00000010889">
    <property type="expression patterns" value="Expressed in frontal cortex and 18 other cell types or tissues"/>
</dbReference>
<dbReference type="ExpressionAtlas" id="D3Z902">
    <property type="expression patterns" value="baseline and differential"/>
</dbReference>
<dbReference type="GO" id="GO:0005694">
    <property type="term" value="C:chromosome"/>
    <property type="evidence" value="ECO:0007669"/>
    <property type="project" value="UniProtKB-SubCell"/>
</dbReference>
<dbReference type="GO" id="GO:0005737">
    <property type="term" value="C:cytoplasm"/>
    <property type="evidence" value="ECO:0000266"/>
    <property type="project" value="RGD"/>
</dbReference>
<dbReference type="GO" id="GO:0005783">
    <property type="term" value="C:endoplasmic reticulum"/>
    <property type="evidence" value="ECO:0000266"/>
    <property type="project" value="RGD"/>
</dbReference>
<dbReference type="GO" id="GO:0005794">
    <property type="term" value="C:Golgi apparatus"/>
    <property type="evidence" value="ECO:0000266"/>
    <property type="project" value="RGD"/>
</dbReference>
<dbReference type="GO" id="GO:0005739">
    <property type="term" value="C:mitochondrion"/>
    <property type="evidence" value="ECO:0000266"/>
    <property type="project" value="RGD"/>
</dbReference>
<dbReference type="GO" id="GO:0005730">
    <property type="term" value="C:nucleolus"/>
    <property type="evidence" value="ECO:0000266"/>
    <property type="project" value="RGD"/>
</dbReference>
<dbReference type="GO" id="GO:0005634">
    <property type="term" value="C:nucleus"/>
    <property type="evidence" value="ECO:0000266"/>
    <property type="project" value="RGD"/>
</dbReference>
<dbReference type="GO" id="GO:1990452">
    <property type="term" value="C:Parkin-FBXW7-Cul1 ubiquitin ligase complex"/>
    <property type="evidence" value="ECO:0000266"/>
    <property type="project" value="RGD"/>
</dbReference>
<dbReference type="GO" id="GO:0048471">
    <property type="term" value="C:perinuclear region of cytoplasm"/>
    <property type="evidence" value="ECO:0000266"/>
    <property type="project" value="RGD"/>
</dbReference>
<dbReference type="GO" id="GO:0019005">
    <property type="term" value="C:SCF ubiquitin ligase complex"/>
    <property type="evidence" value="ECO:0000250"/>
    <property type="project" value="UniProtKB"/>
</dbReference>
<dbReference type="GO" id="GO:0030332">
    <property type="term" value="F:cyclin binding"/>
    <property type="evidence" value="ECO:0000266"/>
    <property type="project" value="RGD"/>
</dbReference>
<dbReference type="GO" id="GO:0042802">
    <property type="term" value="F:identical protein binding"/>
    <property type="evidence" value="ECO:0000266"/>
    <property type="project" value="RGD"/>
</dbReference>
<dbReference type="GO" id="GO:0050816">
    <property type="term" value="F:phosphothreonine residue binding"/>
    <property type="evidence" value="ECO:0000266"/>
    <property type="project" value="RGD"/>
</dbReference>
<dbReference type="GO" id="GO:0030674">
    <property type="term" value="F:protein-macromolecule adaptor activity"/>
    <property type="evidence" value="ECO:0000266"/>
    <property type="project" value="RGD"/>
</dbReference>
<dbReference type="GO" id="GO:0043130">
    <property type="term" value="F:ubiquitin binding"/>
    <property type="evidence" value="ECO:0000318"/>
    <property type="project" value="GO_Central"/>
</dbReference>
<dbReference type="GO" id="GO:0031625">
    <property type="term" value="F:ubiquitin protein ligase binding"/>
    <property type="evidence" value="ECO:0000266"/>
    <property type="project" value="RGD"/>
</dbReference>
<dbReference type="GO" id="GO:1990756">
    <property type="term" value="F:ubiquitin-like ligase-substrate adaptor activity"/>
    <property type="evidence" value="ECO:0000250"/>
    <property type="project" value="UniProtKB"/>
</dbReference>
<dbReference type="GO" id="GO:0097027">
    <property type="term" value="F:ubiquitin-protein transferase activator activity"/>
    <property type="evidence" value="ECO:0000266"/>
    <property type="project" value="RGD"/>
</dbReference>
<dbReference type="GO" id="GO:0006974">
    <property type="term" value="P:DNA damage response"/>
    <property type="evidence" value="ECO:0000250"/>
    <property type="project" value="UniProtKB"/>
</dbReference>
<dbReference type="GO" id="GO:0006281">
    <property type="term" value="P:DNA repair"/>
    <property type="evidence" value="ECO:0007669"/>
    <property type="project" value="UniProtKB-KW"/>
</dbReference>
<dbReference type="GO" id="GO:0030324">
    <property type="term" value="P:lung development"/>
    <property type="evidence" value="ECO:0000266"/>
    <property type="project" value="RGD"/>
</dbReference>
<dbReference type="GO" id="GO:0010629">
    <property type="term" value="P:negative regulation of gene expression"/>
    <property type="evidence" value="ECO:0000266"/>
    <property type="project" value="RGD"/>
</dbReference>
<dbReference type="GO" id="GO:2001205">
    <property type="term" value="P:negative regulation of osteoclast development"/>
    <property type="evidence" value="ECO:0000266"/>
    <property type="project" value="RGD"/>
</dbReference>
<dbReference type="GO" id="GO:0007219">
    <property type="term" value="P:Notch signaling pathway"/>
    <property type="evidence" value="ECO:0000266"/>
    <property type="project" value="RGD"/>
</dbReference>
<dbReference type="GO" id="GO:0070374">
    <property type="term" value="P:positive regulation of ERK1 and ERK2 cascade"/>
    <property type="evidence" value="ECO:0000266"/>
    <property type="project" value="RGD"/>
</dbReference>
<dbReference type="GO" id="GO:1903378">
    <property type="term" value="P:positive regulation of oxidative stress-induced neuron intrinsic apoptotic signaling pathway"/>
    <property type="evidence" value="ECO:0000266"/>
    <property type="project" value="RGD"/>
</dbReference>
<dbReference type="GO" id="GO:1901800">
    <property type="term" value="P:positive regulation of proteasomal protein catabolic process"/>
    <property type="evidence" value="ECO:0000266"/>
    <property type="project" value="RGD"/>
</dbReference>
<dbReference type="GO" id="GO:1903955">
    <property type="term" value="P:positive regulation of protein targeting to mitochondrion"/>
    <property type="evidence" value="ECO:0000266"/>
    <property type="project" value="RGD"/>
</dbReference>
<dbReference type="GO" id="GO:0031398">
    <property type="term" value="P:positive regulation of protein ubiquitination"/>
    <property type="evidence" value="ECO:0000266"/>
    <property type="project" value="RGD"/>
</dbReference>
<dbReference type="GO" id="GO:2000060">
    <property type="term" value="P:positive regulation of ubiquitin-dependent protein catabolic process"/>
    <property type="evidence" value="ECO:0000250"/>
    <property type="project" value="UniProtKB"/>
</dbReference>
<dbReference type="GO" id="GO:0043161">
    <property type="term" value="P:proteasome-mediated ubiquitin-dependent protein catabolic process"/>
    <property type="evidence" value="ECO:0000250"/>
    <property type="project" value="UniProtKB"/>
</dbReference>
<dbReference type="GO" id="GO:0031648">
    <property type="term" value="P:protein destabilization"/>
    <property type="evidence" value="ECO:0000266"/>
    <property type="project" value="RGD"/>
</dbReference>
<dbReference type="GO" id="GO:0070534">
    <property type="term" value="P:protein K63-linked ubiquitination"/>
    <property type="evidence" value="ECO:0000250"/>
    <property type="project" value="UniProtKB"/>
</dbReference>
<dbReference type="GO" id="GO:0050821">
    <property type="term" value="P:protein stabilization"/>
    <property type="evidence" value="ECO:0000266"/>
    <property type="project" value="RGD"/>
</dbReference>
<dbReference type="GO" id="GO:0016567">
    <property type="term" value="P:protein ubiquitination"/>
    <property type="evidence" value="ECO:0000266"/>
    <property type="project" value="RGD"/>
</dbReference>
<dbReference type="GO" id="GO:0090049">
    <property type="term" value="P:regulation of cell migration involved in sprouting angiogenesis"/>
    <property type="evidence" value="ECO:0000266"/>
    <property type="project" value="RGD"/>
</dbReference>
<dbReference type="GO" id="GO:0042752">
    <property type="term" value="P:regulation of circadian rhythm"/>
    <property type="evidence" value="ECO:0000250"/>
    <property type="project" value="UniProtKB"/>
</dbReference>
<dbReference type="GO" id="GO:1901524">
    <property type="term" value="P:regulation of mitophagy"/>
    <property type="evidence" value="ECO:0000266"/>
    <property type="project" value="RGD"/>
</dbReference>
<dbReference type="GO" id="GO:0048511">
    <property type="term" value="P:rhythmic process"/>
    <property type="evidence" value="ECO:0007669"/>
    <property type="project" value="UniProtKB-KW"/>
</dbReference>
<dbReference type="GO" id="GO:0031146">
    <property type="term" value="P:SCF-dependent proteasomal ubiquitin-dependent protein catabolic process"/>
    <property type="evidence" value="ECO:0000250"/>
    <property type="project" value="UniProtKB"/>
</dbReference>
<dbReference type="GO" id="GO:0007062">
    <property type="term" value="P:sister chromatid cohesion"/>
    <property type="evidence" value="ECO:0000266"/>
    <property type="project" value="RGD"/>
</dbReference>
<dbReference type="GO" id="GO:0010992">
    <property type="term" value="P:ubiquitin recycling"/>
    <property type="evidence" value="ECO:0000318"/>
    <property type="project" value="GO_Central"/>
</dbReference>
<dbReference type="GO" id="GO:0001570">
    <property type="term" value="P:vasculogenesis"/>
    <property type="evidence" value="ECO:0000266"/>
    <property type="project" value="RGD"/>
</dbReference>
<dbReference type="CDD" id="cd22133">
    <property type="entry name" value="F-box_FBXW7"/>
    <property type="match status" value="1"/>
</dbReference>
<dbReference type="CDD" id="cd00200">
    <property type="entry name" value="WD40"/>
    <property type="match status" value="1"/>
</dbReference>
<dbReference type="FunFam" id="1.20.1280.50:FF:000004">
    <property type="entry name" value="F-box/WD repeat-containing protein 7 isoform X1"/>
    <property type="match status" value="1"/>
</dbReference>
<dbReference type="FunFam" id="2.130.10.10:FF:000032">
    <property type="entry name" value="F-box/WD repeat-containing protein 7 isoform X1"/>
    <property type="match status" value="1"/>
</dbReference>
<dbReference type="Gene3D" id="1.20.1280.50">
    <property type="match status" value="1"/>
</dbReference>
<dbReference type="Gene3D" id="2.130.10.10">
    <property type="entry name" value="YVTN repeat-like/Quinoprotein amine dehydrogenase"/>
    <property type="match status" value="1"/>
</dbReference>
<dbReference type="InterPro" id="IPR036047">
    <property type="entry name" value="F-box-like_dom_sf"/>
</dbReference>
<dbReference type="InterPro" id="IPR001810">
    <property type="entry name" value="F-box_dom"/>
</dbReference>
<dbReference type="InterPro" id="IPR020472">
    <property type="entry name" value="G-protein_beta_WD-40_rep"/>
</dbReference>
<dbReference type="InterPro" id="IPR015943">
    <property type="entry name" value="WD40/YVTN_repeat-like_dom_sf"/>
</dbReference>
<dbReference type="InterPro" id="IPR019775">
    <property type="entry name" value="WD40_repeat_CS"/>
</dbReference>
<dbReference type="InterPro" id="IPR036322">
    <property type="entry name" value="WD40_repeat_dom_sf"/>
</dbReference>
<dbReference type="InterPro" id="IPR001680">
    <property type="entry name" value="WD40_rpt"/>
</dbReference>
<dbReference type="PANTHER" id="PTHR19849:SF1">
    <property type="entry name" value="F-BOX_WD REPEAT-CONTAINING PROTEIN 7"/>
    <property type="match status" value="1"/>
</dbReference>
<dbReference type="PANTHER" id="PTHR19849">
    <property type="entry name" value="PHOSPHOLIPASE A-2-ACTIVATING PROTEIN"/>
    <property type="match status" value="1"/>
</dbReference>
<dbReference type="Pfam" id="PF12937">
    <property type="entry name" value="F-box-like"/>
    <property type="match status" value="1"/>
</dbReference>
<dbReference type="Pfam" id="PF00400">
    <property type="entry name" value="WD40"/>
    <property type="match status" value="7"/>
</dbReference>
<dbReference type="PRINTS" id="PR00320">
    <property type="entry name" value="GPROTEINBRPT"/>
</dbReference>
<dbReference type="SMART" id="SM00256">
    <property type="entry name" value="FBOX"/>
    <property type="match status" value="1"/>
</dbReference>
<dbReference type="SMART" id="SM00320">
    <property type="entry name" value="WD40"/>
    <property type="match status" value="8"/>
</dbReference>
<dbReference type="SUPFAM" id="SSF81383">
    <property type="entry name" value="F-box domain"/>
    <property type="match status" value="1"/>
</dbReference>
<dbReference type="SUPFAM" id="SSF50978">
    <property type="entry name" value="WD40 repeat-like"/>
    <property type="match status" value="1"/>
</dbReference>
<dbReference type="PROSITE" id="PS50181">
    <property type="entry name" value="FBOX"/>
    <property type="match status" value="1"/>
</dbReference>
<dbReference type="PROSITE" id="PS00678">
    <property type="entry name" value="WD_REPEATS_1"/>
    <property type="match status" value="5"/>
</dbReference>
<dbReference type="PROSITE" id="PS50082">
    <property type="entry name" value="WD_REPEATS_2"/>
    <property type="match status" value="7"/>
</dbReference>
<dbReference type="PROSITE" id="PS50294">
    <property type="entry name" value="WD_REPEATS_REGION"/>
    <property type="match status" value="1"/>
</dbReference>
<protein>
    <recommendedName>
        <fullName evidence="7">F-box/WD repeat-containing protein 7</fullName>
    </recommendedName>
</protein>
<keyword id="KW-0090">Biological rhythms</keyword>
<keyword id="KW-0158">Chromosome</keyword>
<keyword id="KW-0175">Coiled coil</keyword>
<keyword id="KW-0227">DNA damage</keyword>
<keyword id="KW-0234">DNA repair</keyword>
<keyword id="KW-0539">Nucleus</keyword>
<keyword id="KW-0597">Phosphoprotein</keyword>
<keyword id="KW-1185">Reference proteome</keyword>
<keyword id="KW-0677">Repeat</keyword>
<keyword id="KW-0832">Ubl conjugation</keyword>
<keyword id="KW-0833">Ubl conjugation pathway</keyword>
<keyword id="KW-0853">WD repeat</keyword>
<proteinExistence type="evidence at protein level"/>
<evidence type="ECO:0000250" key="1">
    <source>
        <dbReference type="UniProtKB" id="Q8VBV4"/>
    </source>
</evidence>
<evidence type="ECO:0000250" key="2">
    <source>
        <dbReference type="UniProtKB" id="Q969H0"/>
    </source>
</evidence>
<evidence type="ECO:0000255" key="3"/>
<evidence type="ECO:0000255" key="4">
    <source>
        <dbReference type="PROSITE-ProRule" id="PRU00080"/>
    </source>
</evidence>
<evidence type="ECO:0000256" key="5">
    <source>
        <dbReference type="SAM" id="MobiDB-lite"/>
    </source>
</evidence>
<evidence type="ECO:0000269" key="6">
    <source>
    </source>
</evidence>
<evidence type="ECO:0000305" key="7"/>
<evidence type="ECO:0000312" key="8">
    <source>
        <dbReference type="Proteomes" id="UP000002494"/>
    </source>
</evidence>
<evidence type="ECO:0000312" key="9">
    <source>
        <dbReference type="RGD" id="2321145"/>
    </source>
</evidence>